<name>GATA4_CHICK</name>
<protein>
    <recommendedName>
        <fullName>Transcription factor GATA-4</fullName>
    </recommendedName>
    <alternativeName>
        <fullName>GATA-binding factor 4</fullName>
    </alternativeName>
</protein>
<organism>
    <name type="scientific">Gallus gallus</name>
    <name type="common">Chicken</name>
    <dbReference type="NCBI Taxonomy" id="9031"/>
    <lineage>
        <taxon>Eukaryota</taxon>
        <taxon>Metazoa</taxon>
        <taxon>Chordata</taxon>
        <taxon>Craniata</taxon>
        <taxon>Vertebrata</taxon>
        <taxon>Euteleostomi</taxon>
        <taxon>Archelosauria</taxon>
        <taxon>Archosauria</taxon>
        <taxon>Dinosauria</taxon>
        <taxon>Saurischia</taxon>
        <taxon>Theropoda</taxon>
        <taxon>Coelurosauria</taxon>
        <taxon>Aves</taxon>
        <taxon>Neognathae</taxon>
        <taxon>Galloanserae</taxon>
        <taxon>Galliformes</taxon>
        <taxon>Phasianidae</taxon>
        <taxon>Phasianinae</taxon>
        <taxon>Gallus</taxon>
    </lineage>
</organism>
<gene>
    <name type="primary">GATA4</name>
</gene>
<reference key="1">
    <citation type="journal article" date="1994" name="J. Biol. Chem.">
        <title>GATA-4/5/6, a subfamily of three transcription factors transcribed in developing heart and gut.</title>
        <authorList>
            <person name="Laverriere A.C."/>
            <person name="Macneill C."/>
            <person name="Mueller C."/>
            <person name="Poelmann R.E."/>
            <person name="Burch J.B.E."/>
            <person name="Evans T."/>
        </authorList>
    </citation>
    <scope>NUCLEOTIDE SEQUENCE [MRNA]</scope>
    <source>
        <strain>White leghorn</strain>
    </source>
</reference>
<accession>P43691</accession>
<keyword id="KW-0010">Activator</keyword>
<keyword id="KW-0238">DNA-binding</keyword>
<keyword id="KW-0479">Metal-binding</keyword>
<keyword id="KW-0539">Nucleus</keyword>
<keyword id="KW-1185">Reference proteome</keyword>
<keyword id="KW-0677">Repeat</keyword>
<keyword id="KW-0804">Transcription</keyword>
<keyword id="KW-0805">Transcription regulation</keyword>
<keyword id="KW-0862">Zinc</keyword>
<keyword id="KW-0863">Zinc-finger</keyword>
<comment type="function">
    <text evidence="1">Transcriptional activator. Binds to the consensus sequence 5'-AGATAG-3' (By similarity).</text>
</comment>
<comment type="subcellular location">
    <subcellularLocation>
        <location evidence="2">Nucleus</location>
    </subcellularLocation>
</comment>
<comment type="tissue specificity">
    <text>More abundant in heart, with lower levels detected in ovary and small intestine.</text>
</comment>
<sequence>PVYVPTTRVPSMLPSLPYLPSSGSSQQASPVSSHSIWTQPGAESAAYNPGSSHPPVSPRFSFSTSTPIPSTSSRDAAAAYSSSLSLSANGREQYSRGFGSSYSSPYPAYVSPEMATTWTSSPFDSPMLHNLQSRGTPAAARHANIEFFDDYSEGRECVNCGAMSTPLWRRDGTGHYLCNACGLYHKMNGINRPLFKPQRRLSASRRVGLSCANCHTTTTTLWRRNAEGEPVCNACGLYMKLHGVPRPLAMRKEGIQTRKRKPKNLNKTKTPAGPSSSESLTPTTSSTSSSSSATTTEEMRPIKTEPGLSSHYGHPSPISQAFSVSAMSGHGSSIHPAISALKLSPQAYQSAISQSPQASSKQDSWNSLVLAENHGDIITA</sequence>
<proteinExistence type="evidence at transcript level"/>
<feature type="chain" id="PRO_0000083416" description="Transcription factor GATA-4">
    <location>
        <begin position="1" status="less than"/>
        <end position="380"/>
    </location>
</feature>
<feature type="zinc finger region" description="GATA-type 1" evidence="3">
    <location>
        <begin position="157"/>
        <end position="181"/>
    </location>
</feature>
<feature type="zinc finger region" description="GATA-type 2" evidence="3">
    <location>
        <begin position="211"/>
        <end position="235"/>
    </location>
</feature>
<feature type="region of interest" description="Disordered" evidence="4">
    <location>
        <begin position="14"/>
        <end position="73"/>
    </location>
</feature>
<feature type="region of interest" description="Disordered" evidence="4">
    <location>
        <begin position="254"/>
        <end position="316"/>
    </location>
</feature>
<feature type="compositionally biased region" description="Low complexity" evidence="4">
    <location>
        <begin position="14"/>
        <end position="35"/>
    </location>
</feature>
<feature type="compositionally biased region" description="Low complexity" evidence="4">
    <location>
        <begin position="58"/>
        <end position="73"/>
    </location>
</feature>
<feature type="compositionally biased region" description="Basic residues" evidence="4">
    <location>
        <begin position="257"/>
        <end position="266"/>
    </location>
</feature>
<feature type="compositionally biased region" description="Low complexity" evidence="4">
    <location>
        <begin position="275"/>
        <end position="296"/>
    </location>
</feature>
<feature type="non-terminal residue">
    <location>
        <position position="1"/>
    </location>
</feature>
<evidence type="ECO:0000250" key="1"/>
<evidence type="ECO:0000250" key="2">
    <source>
        <dbReference type="UniProtKB" id="P43694"/>
    </source>
</evidence>
<evidence type="ECO:0000255" key="3">
    <source>
        <dbReference type="PROSITE-ProRule" id="PRU00094"/>
    </source>
</evidence>
<evidence type="ECO:0000256" key="4">
    <source>
        <dbReference type="SAM" id="MobiDB-lite"/>
    </source>
</evidence>
<dbReference type="EMBL" id="U11887">
    <property type="protein sequence ID" value="AAA57503.1"/>
    <property type="molecule type" value="mRNA"/>
</dbReference>
<dbReference type="PIR" id="I50701">
    <property type="entry name" value="I50701"/>
</dbReference>
<dbReference type="RefSeq" id="NP_001280035.1">
    <property type="nucleotide sequence ID" value="NM_001293106.1"/>
</dbReference>
<dbReference type="SMR" id="P43691"/>
<dbReference type="FunCoup" id="P43691">
    <property type="interactions" value="96"/>
</dbReference>
<dbReference type="STRING" id="9031.ENSGALP00000030912"/>
<dbReference type="PaxDb" id="9031-ENSGALP00000030912"/>
<dbReference type="GeneID" id="396392"/>
<dbReference type="KEGG" id="gga:396392"/>
<dbReference type="CTD" id="2626"/>
<dbReference type="VEuPathDB" id="HostDB:geneid_396392"/>
<dbReference type="eggNOG" id="KOG1601">
    <property type="taxonomic scope" value="Eukaryota"/>
</dbReference>
<dbReference type="HOGENOM" id="CLU_027524_0_0_1"/>
<dbReference type="InParanoid" id="P43691"/>
<dbReference type="OrthoDB" id="515401at2759"/>
<dbReference type="PhylomeDB" id="P43691"/>
<dbReference type="Proteomes" id="UP000000539">
    <property type="component" value="Unassembled WGS sequence"/>
</dbReference>
<dbReference type="GO" id="GO:0005634">
    <property type="term" value="C:nucleus"/>
    <property type="evidence" value="ECO:0000314"/>
    <property type="project" value="AgBase"/>
</dbReference>
<dbReference type="GO" id="GO:0003677">
    <property type="term" value="F:DNA binding"/>
    <property type="evidence" value="ECO:0000250"/>
    <property type="project" value="UniProtKB"/>
</dbReference>
<dbReference type="GO" id="GO:0000981">
    <property type="term" value="F:DNA-binding transcription factor activity, RNA polymerase II-specific"/>
    <property type="evidence" value="ECO:0000318"/>
    <property type="project" value="GO_Central"/>
</dbReference>
<dbReference type="GO" id="GO:0000978">
    <property type="term" value="F:RNA polymerase II cis-regulatory region sequence-specific DNA binding"/>
    <property type="evidence" value="ECO:0000318"/>
    <property type="project" value="GO_Central"/>
</dbReference>
<dbReference type="GO" id="GO:0008270">
    <property type="term" value="F:zinc ion binding"/>
    <property type="evidence" value="ECO:0007669"/>
    <property type="project" value="UniProtKB-KW"/>
</dbReference>
<dbReference type="GO" id="GO:0045165">
    <property type="term" value="P:cell fate commitment"/>
    <property type="evidence" value="ECO:0000318"/>
    <property type="project" value="GO_Central"/>
</dbReference>
<dbReference type="GO" id="GO:0000122">
    <property type="term" value="P:negative regulation of transcription by RNA polymerase II"/>
    <property type="evidence" value="ECO:0000318"/>
    <property type="project" value="GO_Central"/>
</dbReference>
<dbReference type="GO" id="GO:0045893">
    <property type="term" value="P:positive regulation of DNA-templated transcription"/>
    <property type="evidence" value="ECO:0000250"/>
    <property type="project" value="UniProtKB"/>
</dbReference>
<dbReference type="GO" id="GO:0045944">
    <property type="term" value="P:positive regulation of transcription by RNA polymerase II"/>
    <property type="evidence" value="ECO:0000318"/>
    <property type="project" value="GO_Central"/>
</dbReference>
<dbReference type="GO" id="GO:0032526">
    <property type="term" value="P:response to retinoic acid"/>
    <property type="evidence" value="ECO:0000304"/>
    <property type="project" value="AgBase"/>
</dbReference>
<dbReference type="CDD" id="cd00202">
    <property type="entry name" value="ZnF_GATA"/>
    <property type="match status" value="2"/>
</dbReference>
<dbReference type="FunFam" id="3.30.50.10:FF:000001">
    <property type="entry name" value="GATA transcription factor (GATAd)"/>
    <property type="match status" value="1"/>
</dbReference>
<dbReference type="FunFam" id="3.30.50.10:FF:000032">
    <property type="entry name" value="Transcription factor GATA-3"/>
    <property type="match status" value="1"/>
</dbReference>
<dbReference type="Gene3D" id="3.30.50.10">
    <property type="entry name" value="Erythroid Transcription Factor GATA-1, subunit A"/>
    <property type="match status" value="2"/>
</dbReference>
<dbReference type="InterPro" id="IPR008013">
    <property type="entry name" value="GATA_N"/>
</dbReference>
<dbReference type="InterPro" id="IPR016375">
    <property type="entry name" value="TF_GATA_4/5/6"/>
</dbReference>
<dbReference type="InterPro" id="IPR039355">
    <property type="entry name" value="Transcription_factor_GATA"/>
</dbReference>
<dbReference type="InterPro" id="IPR000679">
    <property type="entry name" value="Znf_GATA"/>
</dbReference>
<dbReference type="InterPro" id="IPR013088">
    <property type="entry name" value="Znf_NHR/GATA"/>
</dbReference>
<dbReference type="PANTHER" id="PTHR10071">
    <property type="entry name" value="TRANSCRIPTION FACTOR GATA FAMILY MEMBER"/>
    <property type="match status" value="1"/>
</dbReference>
<dbReference type="PANTHER" id="PTHR10071:SF154">
    <property type="entry name" value="TRANSCRIPTION FACTOR GATA-4"/>
    <property type="match status" value="1"/>
</dbReference>
<dbReference type="Pfam" id="PF00320">
    <property type="entry name" value="GATA"/>
    <property type="match status" value="2"/>
</dbReference>
<dbReference type="Pfam" id="PF05349">
    <property type="entry name" value="GATA-N"/>
    <property type="match status" value="1"/>
</dbReference>
<dbReference type="PIRSF" id="PIRSF003028">
    <property type="entry name" value="TF_GATA_4/5/6"/>
    <property type="match status" value="1"/>
</dbReference>
<dbReference type="PRINTS" id="PR00619">
    <property type="entry name" value="GATAZNFINGER"/>
</dbReference>
<dbReference type="SMART" id="SM00401">
    <property type="entry name" value="ZnF_GATA"/>
    <property type="match status" value="2"/>
</dbReference>
<dbReference type="SUPFAM" id="SSF57716">
    <property type="entry name" value="Glucocorticoid receptor-like (DNA-binding domain)"/>
    <property type="match status" value="2"/>
</dbReference>
<dbReference type="PROSITE" id="PS00344">
    <property type="entry name" value="GATA_ZN_FINGER_1"/>
    <property type="match status" value="2"/>
</dbReference>
<dbReference type="PROSITE" id="PS50114">
    <property type="entry name" value="GATA_ZN_FINGER_2"/>
    <property type="match status" value="2"/>
</dbReference>